<feature type="chain" id="PRO_0000300189" description="tRNA(Met) cytidine acetate ligase">
    <location>
        <begin position="1"/>
        <end position="379"/>
    </location>
</feature>
<feature type="binding site" evidence="1">
    <location>
        <begin position="7"/>
        <end position="20"/>
    </location>
    <ligand>
        <name>ATP</name>
        <dbReference type="ChEBI" id="CHEBI:30616"/>
    </ligand>
</feature>
<feature type="binding site" evidence="1">
    <location>
        <position position="100"/>
    </location>
    <ligand>
        <name>ATP</name>
        <dbReference type="ChEBI" id="CHEBI:30616"/>
    </ligand>
</feature>
<feature type="binding site" evidence="1">
    <location>
        <position position="153"/>
    </location>
    <ligand>
        <name>ATP</name>
        <dbReference type="ChEBI" id="CHEBI:30616"/>
    </ligand>
</feature>
<feature type="binding site" evidence="1">
    <location>
        <position position="178"/>
    </location>
    <ligand>
        <name>ATP</name>
        <dbReference type="ChEBI" id="CHEBI:30616"/>
    </ligand>
</feature>
<comment type="function">
    <text evidence="1">Catalyzes the formation of N(4)-acetylcytidine (ac(4)C) at the wobble position of elongator tRNA(Met), using acetate and ATP as substrates. First activates an acetate ion to form acetyladenylate (Ac-AMP) and then transfers the acetyl group to tRNA to form ac(4)C34.</text>
</comment>
<comment type="catalytic activity">
    <reaction evidence="1">
        <text>cytidine(34) in elongator tRNA(Met) + acetate + ATP = N(4)-acetylcytidine(34) in elongator tRNA(Met) + AMP + diphosphate</text>
        <dbReference type="Rhea" id="RHEA:58144"/>
        <dbReference type="Rhea" id="RHEA-COMP:10693"/>
        <dbReference type="Rhea" id="RHEA-COMP:10694"/>
        <dbReference type="ChEBI" id="CHEBI:30089"/>
        <dbReference type="ChEBI" id="CHEBI:30616"/>
        <dbReference type="ChEBI" id="CHEBI:33019"/>
        <dbReference type="ChEBI" id="CHEBI:74900"/>
        <dbReference type="ChEBI" id="CHEBI:82748"/>
        <dbReference type="ChEBI" id="CHEBI:456215"/>
    </reaction>
</comment>
<comment type="subcellular location">
    <subcellularLocation>
        <location evidence="1">Cytoplasm</location>
    </subcellularLocation>
</comment>
<comment type="similarity">
    <text evidence="1">Belongs to the TmcAL family.</text>
</comment>
<name>TMCAL_STAA3</name>
<organism>
    <name type="scientific">Staphylococcus aureus (strain USA300)</name>
    <dbReference type="NCBI Taxonomy" id="367830"/>
    <lineage>
        <taxon>Bacteria</taxon>
        <taxon>Bacillati</taxon>
        <taxon>Bacillota</taxon>
        <taxon>Bacilli</taxon>
        <taxon>Bacillales</taxon>
        <taxon>Staphylococcaceae</taxon>
        <taxon>Staphylococcus</taxon>
    </lineage>
</organism>
<sequence length="379" mass="43240">MKSVGLITEYNPFHNGHQYHINQSKKLTNADVTIAIMSGNFVMRGEPAIYNKFTRAKMALSTADLVIELPATASLSSGDHFAELAVKVADYMSVDTIAFGSENNDIKTLKQLAHSINEIEQSESFSQKVKEGKSYPRIISELLEHHEALASPNNILGISYLKAIAKNAKNINAISIKRENAQHHDSLIQHHQFASGTSIRTSIISQDDHWHHVVPKDIQHLYVTPHITLNQIFPYLKYQIIAMTTDSLKNIYTVTEGFENRLKSNIYEATDFHHFVKLLKTKRYTYTHIQRLLMNVLLNIKPTDVTSNIHAVKVLAMNDRGRQYLKHLKTAFPERQYITNINKSNAHYFTNEIKATHIYNAISGQQQTDFNTPVIQQYR</sequence>
<proteinExistence type="inferred from homology"/>
<keyword id="KW-0067">ATP-binding</keyword>
<keyword id="KW-0963">Cytoplasm</keyword>
<keyword id="KW-0436">Ligase</keyword>
<keyword id="KW-0547">Nucleotide-binding</keyword>
<keyword id="KW-0694">RNA-binding</keyword>
<keyword id="KW-0819">tRNA processing</keyword>
<keyword id="KW-0820">tRNA-binding</keyword>
<gene>
    <name evidence="1" type="primary">tmcAL</name>
    <name type="ordered locus">SAUSA300_1025</name>
</gene>
<evidence type="ECO:0000255" key="1">
    <source>
        <dbReference type="HAMAP-Rule" id="MF_01539"/>
    </source>
</evidence>
<dbReference type="EC" id="6.3.4.-" evidence="1"/>
<dbReference type="EMBL" id="CP000255">
    <property type="protein sequence ID" value="ABD22337.1"/>
    <property type="molecule type" value="Genomic_DNA"/>
</dbReference>
<dbReference type="RefSeq" id="WP_000843611.1">
    <property type="nucleotide sequence ID" value="NZ_CP027476.1"/>
</dbReference>
<dbReference type="SMR" id="Q2FHV5"/>
<dbReference type="KEGG" id="saa:SAUSA300_1025"/>
<dbReference type="HOGENOM" id="CLU_038915_0_2_9"/>
<dbReference type="OMA" id="IYQMSEG"/>
<dbReference type="Proteomes" id="UP000001939">
    <property type="component" value="Chromosome"/>
</dbReference>
<dbReference type="GO" id="GO:0005737">
    <property type="term" value="C:cytoplasm"/>
    <property type="evidence" value="ECO:0007669"/>
    <property type="project" value="UniProtKB-SubCell"/>
</dbReference>
<dbReference type="GO" id="GO:0005524">
    <property type="term" value="F:ATP binding"/>
    <property type="evidence" value="ECO:0007669"/>
    <property type="project" value="UniProtKB-KW"/>
</dbReference>
<dbReference type="GO" id="GO:0016879">
    <property type="term" value="F:ligase activity, forming carbon-nitrogen bonds"/>
    <property type="evidence" value="ECO:0007669"/>
    <property type="project" value="UniProtKB-UniRule"/>
</dbReference>
<dbReference type="GO" id="GO:0000049">
    <property type="term" value="F:tRNA binding"/>
    <property type="evidence" value="ECO:0007669"/>
    <property type="project" value="UniProtKB-KW"/>
</dbReference>
<dbReference type="GO" id="GO:0006400">
    <property type="term" value="P:tRNA modification"/>
    <property type="evidence" value="ECO:0007669"/>
    <property type="project" value="UniProtKB-UniRule"/>
</dbReference>
<dbReference type="Gene3D" id="3.40.50.620">
    <property type="entry name" value="HUPs"/>
    <property type="match status" value="1"/>
</dbReference>
<dbReference type="HAMAP" id="MF_01539">
    <property type="entry name" value="TmcAL"/>
    <property type="match status" value="1"/>
</dbReference>
<dbReference type="InterPro" id="IPR014729">
    <property type="entry name" value="Rossmann-like_a/b/a_fold"/>
</dbReference>
<dbReference type="InterPro" id="IPR008513">
    <property type="entry name" value="tRNA(Met)_cyd_acetate_ligase"/>
</dbReference>
<dbReference type="NCBIfam" id="NF010191">
    <property type="entry name" value="PRK13670.1"/>
    <property type="match status" value="1"/>
</dbReference>
<dbReference type="PANTHER" id="PTHR37825">
    <property type="entry name" value="TRNA(MET) CYTIDINE ACETATE LIGASE"/>
    <property type="match status" value="1"/>
</dbReference>
<dbReference type="PANTHER" id="PTHR37825:SF1">
    <property type="entry name" value="TRNA(MET) CYTIDINE ACETATE LIGASE"/>
    <property type="match status" value="1"/>
</dbReference>
<dbReference type="Pfam" id="PF05636">
    <property type="entry name" value="HIGH_NTase1"/>
    <property type="match status" value="1"/>
</dbReference>
<dbReference type="SUPFAM" id="SSF52374">
    <property type="entry name" value="Nucleotidylyl transferase"/>
    <property type="match status" value="1"/>
</dbReference>
<reference key="1">
    <citation type="journal article" date="2006" name="Lancet">
        <title>Complete genome sequence of USA300, an epidemic clone of community-acquired meticillin-resistant Staphylococcus aureus.</title>
        <authorList>
            <person name="Diep B.A."/>
            <person name="Gill S.R."/>
            <person name="Chang R.F."/>
            <person name="Phan T.H."/>
            <person name="Chen J.H."/>
            <person name="Davidson M.G."/>
            <person name="Lin F."/>
            <person name="Lin J."/>
            <person name="Carleton H.A."/>
            <person name="Mongodin E.F."/>
            <person name="Sensabaugh G.F."/>
            <person name="Perdreau-Remington F."/>
        </authorList>
    </citation>
    <scope>NUCLEOTIDE SEQUENCE [LARGE SCALE GENOMIC DNA]</scope>
    <source>
        <strain>USA300</strain>
    </source>
</reference>
<accession>Q2FHV5</accession>
<protein>
    <recommendedName>
        <fullName evidence="1">tRNA(Met) cytidine acetate ligase</fullName>
        <ecNumber evidence="1">6.3.4.-</ecNumber>
    </recommendedName>
</protein>